<evidence type="ECO:0000255" key="1">
    <source>
        <dbReference type="HAMAP-Rule" id="MF_01247"/>
    </source>
</evidence>
<evidence type="ECO:0000305" key="2"/>
<name>MALT_VIBCH</name>
<proteinExistence type="inferred from homology"/>
<gene>
    <name evidence="1" type="primary">malT</name>
    <name type="ordered locus">VC_A0011</name>
</gene>
<organism>
    <name type="scientific">Vibrio cholerae serotype O1 (strain ATCC 39315 / El Tor Inaba N16961)</name>
    <dbReference type="NCBI Taxonomy" id="243277"/>
    <lineage>
        <taxon>Bacteria</taxon>
        <taxon>Pseudomonadati</taxon>
        <taxon>Pseudomonadota</taxon>
        <taxon>Gammaproteobacteria</taxon>
        <taxon>Vibrionales</taxon>
        <taxon>Vibrionaceae</taxon>
        <taxon>Vibrio</taxon>
    </lineage>
</organism>
<feature type="chain" id="PRO_0000184169" description="HTH-type transcriptional regulator MalT">
    <location>
        <begin position="1"/>
        <end position="902"/>
    </location>
</feature>
<feature type="domain" description="HTH luxR-type" evidence="1">
    <location>
        <begin position="832"/>
        <end position="897"/>
    </location>
</feature>
<feature type="DNA-binding region" description="H-T-H motif" evidence="1">
    <location>
        <begin position="856"/>
        <end position="875"/>
    </location>
</feature>
<feature type="binding site" evidence="1">
    <location>
        <begin position="39"/>
        <end position="46"/>
    </location>
    <ligand>
        <name>ATP</name>
        <dbReference type="ChEBI" id="CHEBI:30616"/>
    </ligand>
</feature>
<accession>Q9KNF3</accession>
<dbReference type="EMBL" id="AE003853">
    <property type="protein sequence ID" value="AAF95925.1"/>
    <property type="status" value="ALT_INIT"/>
    <property type="molecule type" value="Genomic_DNA"/>
</dbReference>
<dbReference type="PIR" id="D82513">
    <property type="entry name" value="D82513"/>
</dbReference>
<dbReference type="RefSeq" id="NP_232412.1">
    <property type="nucleotide sequence ID" value="NC_002506.1"/>
</dbReference>
<dbReference type="RefSeq" id="WP_000264940.1">
    <property type="nucleotide sequence ID" value="NZ_LT906615.1"/>
</dbReference>
<dbReference type="SMR" id="Q9KNF3"/>
<dbReference type="STRING" id="243277.VC_A0011"/>
<dbReference type="DNASU" id="2612296"/>
<dbReference type="EnsemblBacteria" id="AAF95925">
    <property type="protein sequence ID" value="AAF95925"/>
    <property type="gene ID" value="VC_A0011"/>
</dbReference>
<dbReference type="KEGG" id="vch:VC_A0011"/>
<dbReference type="PATRIC" id="fig|243277.26.peg.2659"/>
<dbReference type="eggNOG" id="COG2909">
    <property type="taxonomic scope" value="Bacteria"/>
</dbReference>
<dbReference type="HOGENOM" id="CLU_006325_3_0_6"/>
<dbReference type="Proteomes" id="UP000000584">
    <property type="component" value="Chromosome 2"/>
</dbReference>
<dbReference type="GO" id="GO:0005524">
    <property type="term" value="F:ATP binding"/>
    <property type="evidence" value="ECO:0007669"/>
    <property type="project" value="UniProtKB-UniRule"/>
</dbReference>
<dbReference type="GO" id="GO:0003677">
    <property type="term" value="F:DNA binding"/>
    <property type="evidence" value="ECO:0007669"/>
    <property type="project" value="UniProtKB-KW"/>
</dbReference>
<dbReference type="GO" id="GO:0003700">
    <property type="term" value="F:DNA-binding transcription factor activity"/>
    <property type="evidence" value="ECO:0007669"/>
    <property type="project" value="UniProtKB-UniRule"/>
</dbReference>
<dbReference type="GO" id="GO:0045913">
    <property type="term" value="P:positive regulation of carbohydrate metabolic process"/>
    <property type="evidence" value="ECO:0007669"/>
    <property type="project" value="UniProtKB-UniRule"/>
</dbReference>
<dbReference type="GO" id="GO:0045893">
    <property type="term" value="P:positive regulation of DNA-templated transcription"/>
    <property type="evidence" value="ECO:0007669"/>
    <property type="project" value="UniProtKB-UniRule"/>
</dbReference>
<dbReference type="CDD" id="cd06170">
    <property type="entry name" value="LuxR_C_like"/>
    <property type="match status" value="1"/>
</dbReference>
<dbReference type="Gene3D" id="3.40.50.300">
    <property type="entry name" value="P-loop containing nucleotide triphosphate hydrolases"/>
    <property type="match status" value="1"/>
</dbReference>
<dbReference type="Gene3D" id="1.25.40.10">
    <property type="entry name" value="Tetratricopeptide repeat domain"/>
    <property type="match status" value="1"/>
</dbReference>
<dbReference type="Gene3D" id="1.10.10.10">
    <property type="entry name" value="Winged helix-like DNA-binding domain superfamily/Winged helix DNA-binding domain"/>
    <property type="match status" value="1"/>
</dbReference>
<dbReference type="HAMAP" id="MF_01247">
    <property type="entry name" value="HTH_type_MalT"/>
    <property type="match status" value="1"/>
</dbReference>
<dbReference type="InterPro" id="IPR027417">
    <property type="entry name" value="P-loop_NTPase"/>
</dbReference>
<dbReference type="InterPro" id="IPR016032">
    <property type="entry name" value="Sig_transdc_resp-reg_C-effctor"/>
</dbReference>
<dbReference type="InterPro" id="IPR011990">
    <property type="entry name" value="TPR-like_helical_dom_sf"/>
</dbReference>
<dbReference type="InterPro" id="IPR041617">
    <property type="entry name" value="TPR_MalT"/>
</dbReference>
<dbReference type="InterPro" id="IPR023768">
    <property type="entry name" value="Tscrpt_reg_HTH_MalT"/>
</dbReference>
<dbReference type="InterPro" id="IPR000792">
    <property type="entry name" value="Tscrpt_reg_LuxR_C"/>
</dbReference>
<dbReference type="InterPro" id="IPR036388">
    <property type="entry name" value="WH-like_DNA-bd_sf"/>
</dbReference>
<dbReference type="NCBIfam" id="NF003420">
    <property type="entry name" value="PRK04841.1"/>
    <property type="match status" value="1"/>
</dbReference>
<dbReference type="PANTHER" id="PTHR44688">
    <property type="entry name" value="DNA-BINDING TRANSCRIPTIONAL ACTIVATOR DEVR_DOSR"/>
    <property type="match status" value="1"/>
</dbReference>
<dbReference type="PANTHER" id="PTHR44688:SF16">
    <property type="entry name" value="DNA-BINDING TRANSCRIPTIONAL ACTIVATOR DEVR_DOSR"/>
    <property type="match status" value="1"/>
</dbReference>
<dbReference type="Pfam" id="PF00196">
    <property type="entry name" value="GerE"/>
    <property type="match status" value="1"/>
</dbReference>
<dbReference type="Pfam" id="PF17874">
    <property type="entry name" value="TPR_MalT"/>
    <property type="match status" value="1"/>
</dbReference>
<dbReference type="PRINTS" id="PR00038">
    <property type="entry name" value="HTHLUXR"/>
</dbReference>
<dbReference type="SMART" id="SM00421">
    <property type="entry name" value="HTH_LUXR"/>
    <property type="match status" value="1"/>
</dbReference>
<dbReference type="SUPFAM" id="SSF46894">
    <property type="entry name" value="C-terminal effector domain of the bipartite response regulators"/>
    <property type="match status" value="1"/>
</dbReference>
<dbReference type="SUPFAM" id="SSF52540">
    <property type="entry name" value="P-loop containing nucleoside triphosphate hydrolases"/>
    <property type="match status" value="1"/>
</dbReference>
<dbReference type="SUPFAM" id="SSF48452">
    <property type="entry name" value="TPR-like"/>
    <property type="match status" value="1"/>
</dbReference>
<dbReference type="PROSITE" id="PS00622">
    <property type="entry name" value="HTH_LUXR_1"/>
    <property type="match status" value="1"/>
</dbReference>
<dbReference type="PROSITE" id="PS50043">
    <property type="entry name" value="HTH_LUXR_2"/>
    <property type="match status" value="1"/>
</dbReference>
<keyword id="KW-0010">Activator</keyword>
<keyword id="KW-0067">ATP-binding</keyword>
<keyword id="KW-0119">Carbohydrate metabolism</keyword>
<keyword id="KW-0238">DNA-binding</keyword>
<keyword id="KW-0547">Nucleotide-binding</keyword>
<keyword id="KW-1185">Reference proteome</keyword>
<keyword id="KW-0804">Transcription</keyword>
<keyword id="KW-0805">Transcription regulation</keyword>
<comment type="function">
    <text evidence="1">Positively regulates the transcription of the maltose regulon whose gene products are responsible for uptake and catabolism of malto-oligosaccharides. Specifically binds to the promoter region of its target genes, recognizing a short DNA motif called the MalT box.</text>
</comment>
<comment type="activity regulation">
    <text evidence="1">Activated by ATP and maltotriose, which are both required for DNA binding.</text>
</comment>
<comment type="subunit">
    <text evidence="1">Monomer in solution. Oligomerizes to an active state in the presence of the positive effectors ATP and maltotriose.</text>
</comment>
<comment type="similarity">
    <text evidence="1">Belongs to the MalT family.</text>
</comment>
<comment type="sequence caution" evidence="2">
    <conflict type="erroneous initiation">
        <sequence resource="EMBL-CDS" id="AAF95925"/>
    </conflict>
</comment>
<reference key="1">
    <citation type="journal article" date="2000" name="Nature">
        <title>DNA sequence of both chromosomes of the cholera pathogen Vibrio cholerae.</title>
        <authorList>
            <person name="Heidelberg J.F."/>
            <person name="Eisen J.A."/>
            <person name="Nelson W.C."/>
            <person name="Clayton R.A."/>
            <person name="Gwinn M.L."/>
            <person name="Dodson R.J."/>
            <person name="Haft D.H."/>
            <person name="Hickey E.K."/>
            <person name="Peterson J.D."/>
            <person name="Umayam L.A."/>
            <person name="Gill S.R."/>
            <person name="Nelson K.E."/>
            <person name="Read T.D."/>
            <person name="Tettelin H."/>
            <person name="Richardson D.L."/>
            <person name="Ermolaeva M.D."/>
            <person name="Vamathevan J.J."/>
            <person name="Bass S."/>
            <person name="Qin H."/>
            <person name="Dragoi I."/>
            <person name="Sellers P."/>
            <person name="McDonald L.A."/>
            <person name="Utterback T.R."/>
            <person name="Fleischmann R.D."/>
            <person name="Nierman W.C."/>
            <person name="White O."/>
            <person name="Salzberg S.L."/>
            <person name="Smith H.O."/>
            <person name="Colwell R.R."/>
            <person name="Mekalanos J.J."/>
            <person name="Venter J.C."/>
            <person name="Fraser C.M."/>
        </authorList>
    </citation>
    <scope>NUCLEOTIDE SEQUENCE [LARGE SCALE GENOMIC DNA]</scope>
    <source>
        <strain>ATCC 39315 / El Tor Inaba N16961</strain>
    </source>
</reference>
<sequence>MWIPSKLTRPGRLHNAIVRPRVLDLLQHATCYKLVLFRSPAGYGKTTMAAQWLADKPNLGWYSIDDSDNDPFRFMNYLLQAINKATHNACPNAQKLAEKRQFSSLHSLFSEVFAEMADYHGECYVVLDDYHLIHDETIHEAMRFFLKHMPDNLTLVVTSRSTPPLGTANLRVRDLMIEIGNELLAFDTEETTRFFNQRVSDGIDALTANHLRDYVEGWPSAMQLIALQAQHQHRTLAQTIESVSHFNHAHLWDYLVEEVFDLLDDETRYFLMQCSVLDHFDDALVSSLTGRDDALAMIESLNRFGLFISPLEGETNWYRFHNLFAEFLAHQRQARIPQQEQDLQRAAAKAWLEAAAPHQALRHAHLAQDTELLASILSQYGWKMFNQGELEVLEAAINQLSPPQLYREPKLCMLQAWLAQSQHRYNDVGALLAKAAKEMKALNVELSTKEQGEFNALRAQVAINQNEPEKALELAELALSQLDHTTYRSRIVATSVVGEVNHVLGHLSRALSMMQQTEKLARQYQVYHQALWALLQQSEILLAQGYVQAAYEVQDNAFKLIEEQQLHQVPLHEFLLRIRAQILWCWNRLDEAEQAAYKGLSVLENHSQSKHLHCYSMLARIAIGRGELDKAGRFIEQIQHLLKQSTYHVDWTANASLSLLLYWQVKENSTEIRQWLQSSTRPDKACNHFSQLQWRNIARAQIQLGELSEARHTLDFIQEQAQEYQLVTDTNRNLIVEALLAITEGDDLQACHKLKQALRLTNQTGMIGNFLIDGSKIGHLLEKLVHKGELGDLERHRAHLLLKEISTTQRSRSIHFDEEFVEKLVNHPNIPELVRTSPLTQREWQVLGLIYSGFSNEQIAHELDVAGTTIKTHIRNLYQKLNIANRKEAVQTAEQLLQLMGY</sequence>
<protein>
    <recommendedName>
        <fullName evidence="1">HTH-type transcriptional regulator MalT</fullName>
    </recommendedName>
    <alternativeName>
        <fullName evidence="1">ATP-dependent transcriptional activator MalT</fullName>
    </alternativeName>
</protein>